<comment type="function">
    <text evidence="1">May be involved in the calcium-dependent regulation of rhodopsin phosphorylation. Binds three calcium ions (By similarity).</text>
</comment>
<comment type="similarity">
    <text evidence="4">Belongs to the recoverin family.</text>
</comment>
<name>NCLDA_DANRE</name>
<proteinExistence type="evidence at transcript level"/>
<gene>
    <name type="primary">ncalda</name>
    <name type="ORF">zgc:175182</name>
</gene>
<organism>
    <name type="scientific">Danio rerio</name>
    <name type="common">Zebrafish</name>
    <name type="synonym">Brachydanio rerio</name>
    <dbReference type="NCBI Taxonomy" id="7955"/>
    <lineage>
        <taxon>Eukaryota</taxon>
        <taxon>Metazoa</taxon>
        <taxon>Chordata</taxon>
        <taxon>Craniata</taxon>
        <taxon>Vertebrata</taxon>
        <taxon>Euteleostomi</taxon>
        <taxon>Actinopterygii</taxon>
        <taxon>Neopterygii</taxon>
        <taxon>Teleostei</taxon>
        <taxon>Ostariophysi</taxon>
        <taxon>Cypriniformes</taxon>
        <taxon>Danionidae</taxon>
        <taxon>Danioninae</taxon>
        <taxon>Danio</taxon>
    </lineage>
</organism>
<protein>
    <recommendedName>
        <fullName>Neurocalcin-delta A</fullName>
    </recommendedName>
</protein>
<dbReference type="EMBL" id="BC155337">
    <property type="protein sequence ID" value="AAI55338.1"/>
    <property type="molecule type" value="mRNA"/>
</dbReference>
<dbReference type="RefSeq" id="NP_001107882.1">
    <property type="nucleotide sequence ID" value="NM_001114410.1"/>
</dbReference>
<dbReference type="SMR" id="A9JTH1"/>
<dbReference type="FunCoup" id="A9JTH1">
    <property type="interactions" value="484"/>
</dbReference>
<dbReference type="STRING" id="7955.ENSDARP00000094833"/>
<dbReference type="PaxDb" id="7955-ENSDARP00000094833"/>
<dbReference type="PeptideAtlas" id="A9JTH1"/>
<dbReference type="GeneID" id="556178"/>
<dbReference type="KEGG" id="dre:556178"/>
<dbReference type="AGR" id="ZFIN:ZDB-GENE-080220-28"/>
<dbReference type="CTD" id="556178"/>
<dbReference type="ZFIN" id="ZDB-GENE-080220-28">
    <property type="gene designation" value="ncalda"/>
</dbReference>
<dbReference type="eggNOG" id="KOG0044">
    <property type="taxonomic scope" value="Eukaryota"/>
</dbReference>
<dbReference type="InParanoid" id="A9JTH1"/>
<dbReference type="OrthoDB" id="191686at2759"/>
<dbReference type="PhylomeDB" id="A9JTH1"/>
<dbReference type="PRO" id="PR:A9JTH1"/>
<dbReference type="Proteomes" id="UP000000437">
    <property type="component" value="Chromosome 16"/>
</dbReference>
<dbReference type="GO" id="GO:0003779">
    <property type="term" value="F:actin binding"/>
    <property type="evidence" value="ECO:0000318"/>
    <property type="project" value="GO_Central"/>
</dbReference>
<dbReference type="GO" id="GO:0005509">
    <property type="term" value="F:calcium ion binding"/>
    <property type="evidence" value="ECO:0000318"/>
    <property type="project" value="GO_Central"/>
</dbReference>
<dbReference type="GO" id="GO:0015631">
    <property type="term" value="F:tubulin binding"/>
    <property type="evidence" value="ECO:0000318"/>
    <property type="project" value="GO_Central"/>
</dbReference>
<dbReference type="GO" id="GO:0019722">
    <property type="term" value="P:calcium-mediated signaling"/>
    <property type="evidence" value="ECO:0000318"/>
    <property type="project" value="GO_Central"/>
</dbReference>
<dbReference type="GO" id="GO:0009966">
    <property type="term" value="P:regulation of signal transduction"/>
    <property type="evidence" value="ECO:0000318"/>
    <property type="project" value="GO_Central"/>
</dbReference>
<dbReference type="CDD" id="cd00051">
    <property type="entry name" value="EFh"/>
    <property type="match status" value="2"/>
</dbReference>
<dbReference type="FunFam" id="1.10.238.10:FF:000009">
    <property type="entry name" value="Visinin-like protein 1"/>
    <property type="match status" value="1"/>
</dbReference>
<dbReference type="Gene3D" id="1.10.238.10">
    <property type="entry name" value="EF-hand"/>
    <property type="match status" value="1"/>
</dbReference>
<dbReference type="InterPro" id="IPR011992">
    <property type="entry name" value="EF-hand-dom_pair"/>
</dbReference>
<dbReference type="InterPro" id="IPR018247">
    <property type="entry name" value="EF_Hand_1_Ca_BS"/>
</dbReference>
<dbReference type="InterPro" id="IPR002048">
    <property type="entry name" value="EF_hand_dom"/>
</dbReference>
<dbReference type="InterPro" id="IPR028846">
    <property type="entry name" value="Recoverin"/>
</dbReference>
<dbReference type="PANTHER" id="PTHR23055">
    <property type="entry name" value="CALCIUM BINDING PROTEINS"/>
    <property type="match status" value="1"/>
</dbReference>
<dbReference type="PANTHER" id="PTHR23055:SF87">
    <property type="entry name" value="NEUROCALCIN-DELTA"/>
    <property type="match status" value="1"/>
</dbReference>
<dbReference type="Pfam" id="PF00036">
    <property type="entry name" value="EF-hand_1"/>
    <property type="match status" value="1"/>
</dbReference>
<dbReference type="Pfam" id="PF13499">
    <property type="entry name" value="EF-hand_7"/>
    <property type="match status" value="1"/>
</dbReference>
<dbReference type="PRINTS" id="PR00450">
    <property type="entry name" value="RECOVERIN"/>
</dbReference>
<dbReference type="SMART" id="SM00054">
    <property type="entry name" value="EFh"/>
    <property type="match status" value="3"/>
</dbReference>
<dbReference type="SUPFAM" id="SSF47473">
    <property type="entry name" value="EF-hand"/>
    <property type="match status" value="1"/>
</dbReference>
<dbReference type="PROSITE" id="PS00018">
    <property type="entry name" value="EF_HAND_1"/>
    <property type="match status" value="3"/>
</dbReference>
<dbReference type="PROSITE" id="PS50222">
    <property type="entry name" value="EF_HAND_2"/>
    <property type="match status" value="3"/>
</dbReference>
<evidence type="ECO:0000250" key="1"/>
<evidence type="ECO:0000255" key="2"/>
<evidence type="ECO:0000255" key="3">
    <source>
        <dbReference type="PROSITE-ProRule" id="PRU00448"/>
    </source>
</evidence>
<evidence type="ECO:0000305" key="4"/>
<feature type="initiator methionine" description="Removed" evidence="2">
    <location>
        <position position="1"/>
    </location>
</feature>
<feature type="chain" id="PRO_0000362080" description="Neurocalcin-delta A">
    <location>
        <begin position="2"/>
        <end position="193"/>
    </location>
</feature>
<feature type="domain" description="EF-hand 1" evidence="3">
    <location>
        <begin position="60"/>
        <end position="95"/>
    </location>
</feature>
<feature type="domain" description="EF-hand 2" evidence="3">
    <location>
        <begin position="96"/>
        <end position="131"/>
    </location>
</feature>
<feature type="domain" description="EF-hand 3" evidence="3">
    <location>
        <begin position="144"/>
        <end position="179"/>
    </location>
</feature>
<feature type="binding site" evidence="3">
    <location>
        <position position="73"/>
    </location>
    <ligand>
        <name>Ca(2+)</name>
        <dbReference type="ChEBI" id="CHEBI:29108"/>
        <label>1</label>
    </ligand>
</feature>
<feature type="binding site" evidence="3">
    <location>
        <position position="75"/>
    </location>
    <ligand>
        <name>Ca(2+)</name>
        <dbReference type="ChEBI" id="CHEBI:29108"/>
        <label>1</label>
    </ligand>
</feature>
<feature type="binding site" evidence="3">
    <location>
        <position position="77"/>
    </location>
    <ligand>
        <name>Ca(2+)</name>
        <dbReference type="ChEBI" id="CHEBI:29108"/>
        <label>1</label>
    </ligand>
</feature>
<feature type="binding site" evidence="3">
    <location>
        <position position="79"/>
    </location>
    <ligand>
        <name>Ca(2+)</name>
        <dbReference type="ChEBI" id="CHEBI:29108"/>
        <label>1</label>
    </ligand>
</feature>
<feature type="binding site" evidence="3">
    <location>
        <position position="84"/>
    </location>
    <ligand>
        <name>Ca(2+)</name>
        <dbReference type="ChEBI" id="CHEBI:29108"/>
        <label>1</label>
    </ligand>
</feature>
<feature type="binding site" evidence="3">
    <location>
        <position position="109"/>
    </location>
    <ligand>
        <name>Ca(2+)</name>
        <dbReference type="ChEBI" id="CHEBI:29108"/>
        <label>2</label>
    </ligand>
</feature>
<feature type="binding site" evidence="3">
    <location>
        <position position="111"/>
    </location>
    <ligand>
        <name>Ca(2+)</name>
        <dbReference type="ChEBI" id="CHEBI:29108"/>
        <label>2</label>
    </ligand>
</feature>
<feature type="binding site" evidence="3">
    <location>
        <position position="113"/>
    </location>
    <ligand>
        <name>Ca(2+)</name>
        <dbReference type="ChEBI" id="CHEBI:29108"/>
        <label>2</label>
    </ligand>
</feature>
<feature type="binding site" evidence="3">
    <location>
        <position position="115"/>
    </location>
    <ligand>
        <name>Ca(2+)</name>
        <dbReference type="ChEBI" id="CHEBI:29108"/>
        <label>2</label>
    </ligand>
</feature>
<feature type="binding site" evidence="3">
    <location>
        <position position="120"/>
    </location>
    <ligand>
        <name>Ca(2+)</name>
        <dbReference type="ChEBI" id="CHEBI:29108"/>
        <label>2</label>
    </ligand>
</feature>
<feature type="binding site" evidence="3">
    <location>
        <position position="157"/>
    </location>
    <ligand>
        <name>Ca(2+)</name>
        <dbReference type="ChEBI" id="CHEBI:29108"/>
        <label>3</label>
    </ligand>
</feature>
<feature type="binding site" evidence="3">
    <location>
        <position position="159"/>
    </location>
    <ligand>
        <name>Ca(2+)</name>
        <dbReference type="ChEBI" id="CHEBI:29108"/>
        <label>3</label>
    </ligand>
</feature>
<feature type="binding site" evidence="3">
    <location>
        <position position="161"/>
    </location>
    <ligand>
        <name>Ca(2+)</name>
        <dbReference type="ChEBI" id="CHEBI:29108"/>
        <label>3</label>
    </ligand>
</feature>
<feature type="binding site" evidence="3">
    <location>
        <position position="163"/>
    </location>
    <ligand>
        <name>Ca(2+)</name>
        <dbReference type="ChEBI" id="CHEBI:29108"/>
        <label>3</label>
    </ligand>
</feature>
<feature type="binding site" evidence="3">
    <location>
        <position position="168"/>
    </location>
    <ligand>
        <name>Ca(2+)</name>
        <dbReference type="ChEBI" id="CHEBI:29108"/>
        <label>3</label>
    </ligand>
</feature>
<feature type="lipid moiety-binding region" description="N-myristoyl glycine" evidence="2">
    <location>
        <position position="2"/>
    </location>
</feature>
<keyword id="KW-0106">Calcium</keyword>
<keyword id="KW-0449">Lipoprotein</keyword>
<keyword id="KW-0479">Metal-binding</keyword>
<keyword id="KW-0519">Myristate</keyword>
<keyword id="KW-1185">Reference proteome</keyword>
<keyword id="KW-0677">Repeat</keyword>
<accession>A9JTH1</accession>
<reference key="1">
    <citation type="submission" date="2007-11" db="EMBL/GenBank/DDBJ databases">
        <authorList>
            <consortium name="NIH - Zebrafish Gene Collection (ZGC) project"/>
        </authorList>
    </citation>
    <scope>NUCLEOTIDE SEQUENCE [LARGE SCALE MRNA]</scope>
    <source>
        <tissue>Kidney</tissue>
    </source>
</reference>
<sequence>MGKQNSKLRPEVMQDLLESTDFTEHEIQEWYKGFLRDCPSGNLSMEEFKKIYGNFFPYGDASKFAEHVFRTFDANGDGTIDFREFIIALSVTSRGKLEQKLKWAFSMYDLDGNGYISKSEMLEIVQAIYKMVSSVMKMPEDESTPEKRTEKIFRQMDTNRDGKLSLEEFIKGAKTDPSIVRLLQCDPSSAGQF</sequence>